<accession>P11087</accession>
<accession>Q53WT0</accession>
<accession>Q60635</accession>
<accession>Q61367</accession>
<accession>Q61427</accession>
<accession>Q63919</accession>
<accession>Q6PCL3</accession>
<accession>Q810J9</accession>
<organism>
    <name type="scientific">Mus musculus</name>
    <name type="common">Mouse</name>
    <dbReference type="NCBI Taxonomy" id="10090"/>
    <lineage>
        <taxon>Eukaryota</taxon>
        <taxon>Metazoa</taxon>
        <taxon>Chordata</taxon>
        <taxon>Craniata</taxon>
        <taxon>Vertebrata</taxon>
        <taxon>Euteleostomi</taxon>
        <taxon>Mammalia</taxon>
        <taxon>Eutheria</taxon>
        <taxon>Euarchontoglires</taxon>
        <taxon>Glires</taxon>
        <taxon>Rodentia</taxon>
        <taxon>Myomorpha</taxon>
        <taxon>Muroidea</taxon>
        <taxon>Muridae</taxon>
        <taxon>Murinae</taxon>
        <taxon>Mus</taxon>
        <taxon>Mus</taxon>
    </lineage>
</organism>
<gene>
    <name evidence="18" type="primary">Col1a1</name>
    <name evidence="18" type="synonym">Cola1</name>
</gene>
<reference key="1">
    <citation type="journal article" date="1995" name="Matrix Biol.">
        <title>The complete cDNA coding sequence for the mouse pro alpha 1(I) chain of type I procollagen.</title>
        <authorList>
            <person name="Li S.W."/>
            <person name="Khillan J."/>
            <person name="Prockop D.J."/>
        </authorList>
    </citation>
    <scope>NUCLEOTIDE SEQUENCE [MRNA] (ISOFORM 1)</scope>
    <source>
        <strain>FVB/N</strain>
    </source>
</reference>
<reference key="2">
    <citation type="journal article" date="2009" name="PLoS Biol.">
        <title>Lineage-specific biology revealed by a finished genome assembly of the mouse.</title>
        <authorList>
            <person name="Church D.M."/>
            <person name="Goodstadt L."/>
            <person name="Hillier L.W."/>
            <person name="Zody M.C."/>
            <person name="Goldstein S."/>
            <person name="She X."/>
            <person name="Bult C.J."/>
            <person name="Agarwala R."/>
            <person name="Cherry J.L."/>
            <person name="DiCuccio M."/>
            <person name="Hlavina W."/>
            <person name="Kapustin Y."/>
            <person name="Meric P."/>
            <person name="Maglott D."/>
            <person name="Birtle Z."/>
            <person name="Marques A.C."/>
            <person name="Graves T."/>
            <person name="Zhou S."/>
            <person name="Teague B."/>
            <person name="Potamousis K."/>
            <person name="Churas C."/>
            <person name="Place M."/>
            <person name="Herschleb J."/>
            <person name="Runnheim R."/>
            <person name="Forrest D."/>
            <person name="Amos-Landgraf J."/>
            <person name="Schwartz D.C."/>
            <person name="Cheng Z."/>
            <person name="Lindblad-Toh K."/>
            <person name="Eichler E.E."/>
            <person name="Ponting C.P."/>
        </authorList>
    </citation>
    <scope>NUCLEOTIDE SEQUENCE [LARGE SCALE GENOMIC DNA]</scope>
    <source>
        <strain>C57BL/6J</strain>
    </source>
</reference>
<reference key="3">
    <citation type="journal article" date="2004" name="Genome Res.">
        <title>The status, quality, and expansion of the NIH full-length cDNA project: the Mammalian Gene Collection (MGC).</title>
        <authorList>
            <consortium name="The MGC Project Team"/>
        </authorList>
    </citation>
    <scope>NUCLEOTIDE SEQUENCE [LARGE SCALE MRNA] (ISOFORMS 1 AND 2)</scope>
    <source>
        <strain>FVB/N</strain>
        <tissue>Colon</tissue>
    </source>
</reference>
<reference key="4">
    <citation type="journal article" date="1984" name="Proc. Natl. Acad. Sci. U.S.A.">
        <title>Insertion of retrovirus into the first intron of alpha1(I) collagen gene leads to embryonic lethal mutation in mice.</title>
        <authorList>
            <person name="Harbers K."/>
            <person name="Kuehn M."/>
            <person name="Delius H."/>
            <person name="Jaenisch R."/>
        </authorList>
    </citation>
    <scope>NUCLEOTIDE SEQUENCE [GENOMIC DNA] OF 1-25</scope>
</reference>
<reference key="5">
    <citation type="journal article" date="1993" name="Biochim. Biophys. Acta">
        <title>Genomic sequence of mouse COL1A1 encoding the collagen propeptides.</title>
        <authorList>
            <person name="Fenton S.P."/>
            <person name="Lamande S.R."/>
            <person name="Hannagan M."/>
            <person name="Stacey A."/>
            <person name="Jaenisch R."/>
            <person name="Bateman J.F."/>
        </authorList>
    </citation>
    <scope>NUCLEOTIDE SEQUENCE [GENOMIC DNA] OF 1-185 AND 1030-1453</scope>
</reference>
<reference key="6">
    <citation type="journal article" date="1994" name="Mol. Cell. Biol.">
        <title>DNA methylation represses the murine alpha 1(I) collagen promoter by an indirect mechanism.</title>
        <authorList>
            <person name="Rhodes K."/>
            <person name="Rippe R.A."/>
            <person name="Umezawa A."/>
            <person name="Nehls M."/>
            <person name="Brenner D.A."/>
            <person name="Breindl M."/>
        </authorList>
    </citation>
    <scope>NUCLEOTIDE SEQUENCE [GENOMIC DNA] OF 1-942</scope>
    <source>
        <strain>C57BL/6J</strain>
        <tissue>Liver</tissue>
    </source>
</reference>
<reference key="7">
    <citation type="journal article" date="1985" name="Gene">
        <title>Nucleotide sequence of a cDNA clone for mouse pro alpha 1(I) collagen protein.</title>
        <authorList>
            <person name="French B.T."/>
            <person name="Lee W.-H."/>
            <person name="Maul G.G."/>
        </authorList>
    </citation>
    <scope>NUCLEOTIDE SEQUENCE [MRNA] OF 518-1128 (ISOFORM 1)</scope>
</reference>
<reference key="8">
    <citation type="journal article" date="1982" name="Mol. Cell. Biol.">
        <title>DNA sequence analysis of a mouse pro alpha 1 (I) procollagen gene: evidence for a mouse B1 element within the gene.</title>
        <authorList>
            <person name="Monson J.M."/>
            <person name="Friedman J."/>
            <person name="McCarthy B.J."/>
        </authorList>
    </citation>
    <scope>NUCLEOTIDE SEQUENCE [GENOMIC DNA] OF 735-1130</scope>
</reference>
<reference key="9">
    <citation type="journal article" date="1981" name="DNA">
        <title>Identification of a Balb/c mouse pro alpha 1(I) procollagen gene: evidence for insertions or deletions in gene coding sequences.</title>
        <authorList>
            <person name="Monson J.M."/>
            <person name="McCarthy B.J."/>
        </authorList>
    </citation>
    <scope>NUCLEOTIDE SEQUENCE [GENOMIC DNA] OF 735-878 AND 1005-1058</scope>
</reference>
<reference key="10">
    <citation type="journal article" date="1988" name="Nucleic Acids Res.">
        <title>Two mRNAs of mouse pro alpha 1(I) collagen gene differ in the size of the 3'-untranslated region.</title>
        <authorList>
            <person name="Mooslehner K."/>
            <person name="Harbers K."/>
        </authorList>
    </citation>
    <scope>NUCLEOTIDE SEQUENCE [GENOMIC DNA] OF 1442-1453</scope>
</reference>
<reference key="11">
    <citation type="journal article" date="1991" name="Biochim. Biophys. Acta">
        <title>Specific hybridization probes for mouse type I, II, III and IX collagen mRNAs.</title>
        <authorList>
            <person name="Metsaeranta M."/>
            <person name="Toman D."/>
            <person name="de Crombrugghe B."/>
            <person name="Vuorio E."/>
        </authorList>
    </citation>
    <scope>NUCLEOTIDE SEQUENCE [GENOMIC DNA] OF 1442-1453</scope>
</reference>
<reference key="12">
    <citation type="journal article" date="2007" name="J. Proteome Res.">
        <title>Enhanced analysis of the mouse plasma proteome using cysteine-containing tryptic glycopeptides.</title>
        <authorList>
            <person name="Bernhard O.K."/>
            <person name="Kapp E.A."/>
            <person name="Simpson R.J."/>
        </authorList>
    </citation>
    <scope>GLYCOSYLATION [LARGE SCALE ANALYSIS] AT ASN-1354</scope>
    <source>
        <strain>C57BL/6J</strain>
        <tissue>Plasma</tissue>
    </source>
</reference>
<reference key="13">
    <citation type="journal article" date="2010" name="Cell">
        <title>A tissue-specific atlas of mouse protein phosphorylation and expression.</title>
        <authorList>
            <person name="Huttlin E.L."/>
            <person name="Jedrychowski M.P."/>
            <person name="Elias J.E."/>
            <person name="Goswami T."/>
            <person name="Rad R."/>
            <person name="Beausoleil S.A."/>
            <person name="Villen J."/>
            <person name="Haas W."/>
            <person name="Sowa M.E."/>
            <person name="Gygi S.P."/>
        </authorList>
    </citation>
    <scope>IDENTIFICATION BY MASS SPECTROMETRY [LARGE SCALE ANALYSIS]</scope>
    <source>
        <tissue>Brown adipose tissue</tissue>
        <tissue>Heart</tissue>
        <tissue>Kidney</tissue>
        <tissue>Liver</tissue>
        <tissue>Lung</tissue>
        <tissue>Pancreas</tissue>
        <tissue>Spleen</tissue>
        <tissue>Testis</tissue>
    </source>
</reference>
<reference key="14">
    <citation type="journal article" date="2013" name="Eur. J. Oral Sci.">
        <title>Msx1 regulates proliferation and differentiation of mouse dental mesenchymal cells in culture.</title>
        <authorList>
            <person name="Feng X.Y."/>
            <person name="Zhao Y.M."/>
            <person name="Wang W.J."/>
            <person name="Ge L.H."/>
        </authorList>
    </citation>
    <scope>DEVELOPMENTAL STAGE</scope>
</reference>
<reference key="15">
    <citation type="journal article" date="2015" name="J. Biol. Chem.">
        <title>Post-translationally abnormal collagens of prolyl 3-hydroxylase-2 null mice offer a pathobiological mechanism for the high myopia linked to human LEPREL1 mutations.</title>
        <authorList>
            <person name="Hudson D.M."/>
            <person name="Joeng K.S."/>
            <person name="Werther R."/>
            <person name="Rajagopal A."/>
            <person name="Weis M."/>
            <person name="Lee B.H."/>
            <person name="Eyre D.R."/>
        </authorList>
    </citation>
    <scope>HYDROXYLATION AT PRO-874; PRO-875; PRO-884; PRO-887; PRO-1148; PRO-1153; PRO-1154; PRO-1168; PRO-1169; PRO-1171; PRO-1172; PRO-1174; PRO-1175; PRO-1178 AND PRO-1181</scope>
    <scope>GLYCOSYLATION AT HYDROYLATED LYSINE</scope>
    <scope>IDENTIFICATION BY MASS SPECTROMETRY</scope>
</reference>
<reference key="16">
    <citation type="journal article" date="2016" name="PLoS Genet.">
        <title>Sc65-Null Mice Provide Evidence for a Novel Endoplasmic Reticulum Complex Regulating Collagen Lysyl Hydroxylation.</title>
        <authorList>
            <person name="Heard M.E."/>
            <person name="Besio R."/>
            <person name="Weis M."/>
            <person name="Rai J."/>
            <person name="Hudson D.M."/>
            <person name="Dimori M."/>
            <person name="Zimmerman S.M."/>
            <person name="Kamykowski J.A."/>
            <person name="Hogue W.R."/>
            <person name="Swain F.L."/>
            <person name="Burdine M.S."/>
            <person name="Mackintosh S.G."/>
            <person name="Tackett A.J."/>
            <person name="Suva L.J."/>
            <person name="Eyre D.R."/>
            <person name="Morello R."/>
        </authorList>
    </citation>
    <scope>HYDROXYLATION AT LYS-254 AND LYS-1097</scope>
    <scope>GLYCOSYLATION AT LYS-254 AND LYS-1097</scope>
</reference>
<reference key="17">
    <citation type="journal article" date="2018" name="Eur. J. Oral Sci.">
        <title>Homeobox protein MSX-1 inhibits expression of bone morphogenetic protein 2, bone morphogenetic protein 4, and lymphoid enhancer-binding factor 1 via Wnt/beta-catenin signaling to prevent differentiation of dental mesenchymal cells during the late bell stage.</title>
        <authorList>
            <person name="Feng X.Y."/>
            <person name="Wu X.S."/>
            <person name="Wang J.S."/>
            <person name="Zhang C.M."/>
            <person name="Wang S.L."/>
        </authorList>
    </citation>
    <scope>DEVELOPMENTAL STAGE</scope>
</reference>
<comment type="function">
    <text>Type I collagen is a member of group I collagen (fibrillar forming collagen).</text>
</comment>
<comment type="subunit">
    <text evidence="2 3 4">Trimers of one alpha 2(I) and two alpha 1(I) chains. Interacts with MRC2. Interacts with TRAM2. Interacts with MFAP4 in a Ca (2+)-dependent manner.</text>
</comment>
<comment type="subcellular location">
    <subcellularLocation>
        <location evidence="8">Secreted</location>
        <location evidence="8">Extracellular space</location>
        <location evidence="8">Extracellular matrix</location>
    </subcellularLocation>
</comment>
<comment type="alternative products">
    <event type="alternative splicing"/>
    <isoform>
        <id>P11087-1</id>
        <name>1</name>
        <sequence type="displayed"/>
    </isoform>
    <isoform>
        <id>P11087-2</id>
        <name>2</name>
        <sequence type="described" ref="VSP_016548"/>
    </isoform>
</comment>
<comment type="tissue specificity">
    <text>Forms the fibrils of tendon, ligaments and bones. In bones the fibrils are mineralized with calcium hydroxyapatite.</text>
</comment>
<comment type="developmental stage">
    <text evidence="11 14">Expressed in early bell stage dental mesenchymal cells at 15.5 dpc (at protein level) (PubMed:24028588). Expressed in bell stage dental mesenchymal cells at 17.5 dpc (PubMed:29148101).</text>
</comment>
<comment type="domain">
    <text evidence="1">The C-terminal propeptide, also known as COLFI domain, have crucial roles in tissue growth and repair by controlling both the intracellular assembly of procollagen molecules and the extracellular assembly of collagen fibrils. It binds a calcium ion which is essential for its function (By similarity).</text>
</comment>
<comment type="PTM">
    <text evidence="12">Contains mostly 4-hydroxyproline. Proline residues at the third position of the tripeptide repeating unit (G-X-Y) are hydroxylated in some or all of the chains.</text>
</comment>
<comment type="PTM">
    <text evidence="12">Contains 3-hydroxyproline at a few sites. This modification occurs on the first proline residue in the sequence motif Gly-Pro-Hyp, where Hyp is 4-hydroxyproline.</text>
</comment>
<comment type="PTM">
    <text evidence="13 17">Lysine residues at the third position of the tripeptide repeating unit (G-X-Y) are 5-hydroxylated in some or all of the chains.</text>
</comment>
<comment type="PTM">
    <text evidence="12 13">O-glycosylated on hydroxylated lysine residues. The O-linked glycan consists of a Glc-Gal disaccharide.</text>
</comment>
<comment type="similarity">
    <text evidence="8">Belongs to the fibrillar collagen family.</text>
</comment>
<comment type="sequence caution" evidence="16">
    <conflict type="erroneous gene model prediction">
        <sequence resource="EMBL-CDS" id="CAA38657"/>
    </conflict>
</comment>
<sequence length="1453" mass="138032">MFSFVDLRLLLLLGATALLTHGQEDIPEVSCIHNGLRVPNGETWKPEVCLICICHNGTAVCDDVQCNEELDCPNPQRREGECCAFCPEEYVSPNSEDVGVEGPKGDPGPQGPRGPVGPPGRDGIPGQPGLPGPPGPPGPPGPPGLGGNFASQMSYGYDEKSAGVSVPGPMGPSGPRGLPGPPGAPGPQGFQGPPGEPGEPGGSGPMGPRGPPGPPGKNGDDGEAGKPGRPGERGPPGPQGARGLPGTAGLPGMKGHRGFSGLDGAKGDAGPAGPKGEPGSPGENGAPGQMGPRGLPGERGRPGPPGTAGARGNDGAVGAAGPPGPTGPTGPPGFPGAVGAKGEAGPQGARGSEGPQGVRGEPGPPGPAGAAGPAGNPGADGQPGAKGANGAPGIAGAPGFPGARGPSGPQGPSGPPGPKGNSGEPGAPGNKGDTGAKGEPGATGVQGPPGPAGEEGKRGARGEPGPSGLPGPPGERGGPGSRGFPGADGVAGPKGPSGERGAPGPAGPKGSPGEAGRPGEAGLPGAKGLTGSPGSPGPDGKTGPPGPAGQDGRPGPAGPPGARGQAGVMGFPGPKGTAGEPGKAGERGLPGPPGAVGPAGKDGEAGAQGAPGPAGPAGERGEQGPAGSPGFQGLPGPAGPPGEAGKPGEQGVPGDLGAPGPSGARGERGFPGERGVQGPPGPAGPRGNNGAPGNDGAKGDTGAPGAPGSQGAPGLQGMPGERGAAGLPGPKGDRGDAGPKGADGSPGKDGARGLTGPIGPPGPAGAPGDKGEAGPSGPPGPTGARGAPGDRGEAGPPGPAGFAGPPGADGQPGAKGEPGDTGVKGDAGPPGPAGPAGPPGPIGNVGAPGPKGPRGAAGPPGATGFPGAAGRVGPPGPSGNAGPPGPPGPVGKEGGKGPRGETGPAGRPGEVGPPGPPGPAGEKGSPGADGPAGSPGTPGPQGIAGQRGVVGLPGQRGERGFPGLPGPSGEPGKQGPSGSSGERGPPGPMGPPGLAGPPGESGREGSPGAEGSPGRDGAPGAKGDRGETGPAGPPGAPGAPGAPGPVGPAGKNGDRGETGPAGPAGPIGPAGARGPAGPQGPRGDKGETGEQGDRGIKGHRGFSGLQGPPGSPGSPGEQGPSGASGPAGPRGPPGSAGSPGKDGLNGLPGPIGPPGPRGRTGDSGPAGPPGPPGPPGPPGPPSGGYDFSFLPQPPQEKSQDGGRYYRADDANVVRDRDLEVDTTLKSLSQQIENIRSPEGSRKNPARTCRDLKMCHSDWKSGEYWIDPNQGCNLDAIKVYCNMETGQTCVFPTQPSVPQKNWYISPNPKEKKHVWFGESMTDGFPFEYGSEGSDPADVAIQLTFLRLMSTEASQNITYHCKNSVAYMDQQTGNLKKALLLQGSNEIELRGEGNSRFTYSTLVDGCTSHTGTWGKTVIEYKTTKTSRLPIIDVAPLDIGAPDQEFGLDIGPACFV</sequence>
<protein>
    <recommendedName>
        <fullName evidence="16">Collagen alpha-1(I) chain</fullName>
    </recommendedName>
    <alternativeName>
        <fullName>Alpha-1 type I collagen</fullName>
    </alternativeName>
</protein>
<name>CO1A1_MOUSE</name>
<keyword id="KW-0025">Alternative splicing</keyword>
<keyword id="KW-0106">Calcium</keyword>
<keyword id="KW-0176">Collagen</keyword>
<keyword id="KW-1015">Disulfide bond</keyword>
<keyword id="KW-0272">Extracellular matrix</keyword>
<keyword id="KW-0325">Glycoprotein</keyword>
<keyword id="KW-0379">Hydroxylation</keyword>
<keyword id="KW-0479">Metal-binding</keyword>
<keyword id="KW-0597">Phosphoprotein</keyword>
<keyword id="KW-1185">Reference proteome</keyword>
<keyword id="KW-0677">Repeat</keyword>
<keyword id="KW-0964">Secreted</keyword>
<keyword id="KW-0732">Signal</keyword>
<dbReference type="EMBL" id="U08020">
    <property type="protein sequence ID" value="AAA88912.1"/>
    <property type="molecule type" value="mRNA"/>
</dbReference>
<dbReference type="EMBL" id="AL606480">
    <property type="status" value="NOT_ANNOTATED_CDS"/>
    <property type="molecule type" value="Genomic_DNA"/>
</dbReference>
<dbReference type="EMBL" id="AL662790">
    <property type="status" value="NOT_ANNOTATED_CDS"/>
    <property type="molecule type" value="Genomic_DNA"/>
</dbReference>
<dbReference type="EMBL" id="BC050014">
    <property type="protein sequence ID" value="AAH50014.1"/>
    <property type="molecule type" value="mRNA"/>
</dbReference>
<dbReference type="EMBL" id="BC059281">
    <property type="protein sequence ID" value="AAH59281.1"/>
    <property type="molecule type" value="mRNA"/>
</dbReference>
<dbReference type="EMBL" id="K01688">
    <property type="protein sequence ID" value="AAA37330.1"/>
    <property type="molecule type" value="Genomic_DNA"/>
</dbReference>
<dbReference type="EMBL" id="S67530">
    <property type="protein sequence ID" value="AAB29424.1"/>
    <property type="molecule type" value="Genomic_DNA"/>
</dbReference>
<dbReference type="EMBL" id="S67482">
    <property type="status" value="NOT_ANNOTATED_CDS"/>
    <property type="molecule type" value="Genomic_DNA"/>
</dbReference>
<dbReference type="EMBL" id="X54876">
    <property type="protein sequence ID" value="CAA38657.1"/>
    <property type="status" value="ALT_SEQ"/>
    <property type="molecule type" value="Genomic_DNA"/>
</dbReference>
<dbReference type="EMBL" id="M14423">
    <property type="protein sequence ID" value="AAA37333.1"/>
    <property type="molecule type" value="mRNA"/>
</dbReference>
<dbReference type="EMBL" id="M17491">
    <property type="protein sequence ID" value="AAA37334.1"/>
    <property type="molecule type" value="Genomic_DNA"/>
</dbReference>
<dbReference type="EMBL" id="K03036">
    <property type="protein sequence ID" value="AAA37332.1"/>
    <property type="molecule type" value="Genomic_DNA"/>
</dbReference>
<dbReference type="EMBL" id="K03029">
    <property type="protein sequence ID" value="AAA37332.1"/>
    <property type="status" value="JOINED"/>
    <property type="molecule type" value="Genomic_DNA"/>
</dbReference>
<dbReference type="EMBL" id="K03030">
    <property type="protein sequence ID" value="AAA37332.1"/>
    <property type="status" value="JOINED"/>
    <property type="molecule type" value="Genomic_DNA"/>
</dbReference>
<dbReference type="EMBL" id="K03031">
    <property type="protein sequence ID" value="AAA37332.1"/>
    <property type="status" value="JOINED"/>
    <property type="molecule type" value="Genomic_DNA"/>
</dbReference>
<dbReference type="EMBL" id="K03032">
    <property type="protein sequence ID" value="AAA37332.1"/>
    <property type="status" value="JOINED"/>
    <property type="molecule type" value="Genomic_DNA"/>
</dbReference>
<dbReference type="EMBL" id="K03033">
    <property type="protein sequence ID" value="AAA37332.1"/>
    <property type="status" value="JOINED"/>
    <property type="molecule type" value="Genomic_DNA"/>
</dbReference>
<dbReference type="EMBL" id="K03034">
    <property type="protein sequence ID" value="AAA37332.1"/>
    <property type="status" value="JOINED"/>
    <property type="molecule type" value="Genomic_DNA"/>
</dbReference>
<dbReference type="EMBL" id="K03035">
    <property type="protein sequence ID" value="AAA37332.1"/>
    <property type="status" value="JOINED"/>
    <property type="molecule type" value="Genomic_DNA"/>
</dbReference>
<dbReference type="EMBL" id="X06753">
    <property type="protein sequence ID" value="CAA29927.1"/>
    <property type="molecule type" value="Genomic_DNA"/>
</dbReference>
<dbReference type="EMBL" id="X15896">
    <property type="protein sequence ID" value="CAA33904.1"/>
    <property type="molecule type" value="Genomic_DNA"/>
</dbReference>
<dbReference type="EMBL" id="X57981">
    <property type="protein sequence ID" value="CAA41046.1"/>
    <property type="molecule type" value="Genomic_DNA"/>
</dbReference>
<dbReference type="CCDS" id="CCDS25265.1">
    <molecule id="P11087-1"/>
</dbReference>
<dbReference type="PIR" id="I49558">
    <property type="entry name" value="I49558"/>
</dbReference>
<dbReference type="PIR" id="S57243">
    <property type="entry name" value="S21626"/>
</dbReference>
<dbReference type="RefSeq" id="NP_031768.2">
    <molecule id="P11087-1"/>
    <property type="nucleotide sequence ID" value="NM_007742.4"/>
</dbReference>
<dbReference type="SMR" id="P11087"/>
<dbReference type="BioGRID" id="198831">
    <property type="interactions" value="16"/>
</dbReference>
<dbReference type="ComplexPortal" id="CPX-2956">
    <property type="entry name" value="Collagen type I trimer"/>
</dbReference>
<dbReference type="FunCoup" id="P11087">
    <property type="interactions" value="789"/>
</dbReference>
<dbReference type="IntAct" id="P11087">
    <property type="interactions" value="2"/>
</dbReference>
<dbReference type="MINT" id="P11087"/>
<dbReference type="STRING" id="10090.ENSMUSP00000001547"/>
<dbReference type="GlyConnect" id="2220">
    <property type="glycosylation" value="1 N-Linked glycan (1 site)"/>
</dbReference>
<dbReference type="GlyCosmos" id="P11087">
    <property type="glycosylation" value="4 sites, 1 glycan"/>
</dbReference>
<dbReference type="GlyGen" id="P11087">
    <property type="glycosylation" value="12 sites, 2 N-linked glycans (1 site), 1 O-linked glycan (1 site)"/>
</dbReference>
<dbReference type="iPTMnet" id="P11087"/>
<dbReference type="PhosphoSitePlus" id="P11087"/>
<dbReference type="SwissPalm" id="P11087"/>
<dbReference type="CPTAC" id="non-CPTAC-3568"/>
<dbReference type="jPOST" id="P11087"/>
<dbReference type="PaxDb" id="10090-ENSMUSP00000001547"/>
<dbReference type="PeptideAtlas" id="P11087"/>
<dbReference type="ProteomicsDB" id="283472">
    <molecule id="P11087-1"/>
</dbReference>
<dbReference type="ProteomicsDB" id="283473">
    <molecule id="P11087-2"/>
</dbReference>
<dbReference type="Pumba" id="P11087"/>
<dbReference type="Antibodypedia" id="1980">
    <property type="antibodies" value="887 antibodies from 44 providers"/>
</dbReference>
<dbReference type="DNASU" id="12842"/>
<dbReference type="Ensembl" id="ENSMUST00000001547.8">
    <molecule id="P11087-1"/>
    <property type="protein sequence ID" value="ENSMUSP00000001547.8"/>
    <property type="gene ID" value="ENSMUSG00000001506.11"/>
</dbReference>
<dbReference type="GeneID" id="12842"/>
<dbReference type="KEGG" id="mmu:12842"/>
<dbReference type="UCSC" id="uc007kzn.1">
    <molecule id="P11087-1"/>
    <property type="organism name" value="mouse"/>
</dbReference>
<dbReference type="AGR" id="MGI:88467"/>
<dbReference type="CTD" id="1277"/>
<dbReference type="MGI" id="MGI:88467">
    <property type="gene designation" value="Col1a1"/>
</dbReference>
<dbReference type="VEuPathDB" id="HostDB:ENSMUSG00000001506"/>
<dbReference type="eggNOG" id="KOG3544">
    <property type="taxonomic scope" value="Eukaryota"/>
</dbReference>
<dbReference type="GeneTree" id="ENSGT00940000156584"/>
<dbReference type="HOGENOM" id="CLU_001074_2_3_1"/>
<dbReference type="InParanoid" id="P11087"/>
<dbReference type="OMA" id="YYDRDVW"/>
<dbReference type="OrthoDB" id="8939548at2759"/>
<dbReference type="PhylomeDB" id="P11087"/>
<dbReference type="TreeFam" id="TF344135"/>
<dbReference type="Reactome" id="R-MMU-114604">
    <property type="pathway name" value="GPVI-mediated activation cascade"/>
</dbReference>
<dbReference type="Reactome" id="R-MMU-1442490">
    <property type="pathway name" value="Collagen degradation"/>
</dbReference>
<dbReference type="Reactome" id="R-MMU-1474244">
    <property type="pathway name" value="Extracellular matrix organization"/>
</dbReference>
<dbReference type="Reactome" id="R-MMU-1650814">
    <property type="pathway name" value="Collagen biosynthesis and modifying enzymes"/>
</dbReference>
<dbReference type="Reactome" id="R-MMU-198933">
    <property type="pathway name" value="Immunoregulatory interactions between a Lymphoid and a non-Lymphoid cell"/>
</dbReference>
<dbReference type="Reactome" id="R-MMU-2022090">
    <property type="pathway name" value="Assembly of collagen fibrils and other multimeric structures"/>
</dbReference>
<dbReference type="Reactome" id="R-MMU-202733">
    <property type="pathway name" value="Cell surface interactions at the vascular wall"/>
</dbReference>
<dbReference type="Reactome" id="R-MMU-216083">
    <property type="pathway name" value="Integrin cell surface interactions"/>
</dbReference>
<dbReference type="Reactome" id="R-MMU-2243919">
    <property type="pathway name" value="Crosslinking of collagen fibrils"/>
</dbReference>
<dbReference type="Reactome" id="R-MMU-3000171">
    <property type="pathway name" value="Non-integrin membrane-ECM interactions"/>
</dbReference>
<dbReference type="Reactome" id="R-MMU-3000178">
    <property type="pathway name" value="ECM proteoglycans"/>
</dbReference>
<dbReference type="Reactome" id="R-MMU-430116">
    <property type="pathway name" value="GP1b-IX-V activation signalling"/>
</dbReference>
<dbReference type="Reactome" id="R-MMU-75892">
    <property type="pathway name" value="Platelet Adhesion to exposed collagen"/>
</dbReference>
<dbReference type="Reactome" id="R-MMU-76009">
    <property type="pathway name" value="Platelet Aggregation (Plug Formation)"/>
</dbReference>
<dbReference type="Reactome" id="R-MMU-8874081">
    <property type="pathway name" value="MET activates PTK2 signaling"/>
</dbReference>
<dbReference type="Reactome" id="R-MMU-8948216">
    <property type="pathway name" value="Collagen chain trimerization"/>
</dbReference>
<dbReference type="BioGRID-ORCS" id="12842">
    <property type="hits" value="2 hits in 76 CRISPR screens"/>
</dbReference>
<dbReference type="ChiTaRS" id="Col1a1">
    <property type="organism name" value="mouse"/>
</dbReference>
<dbReference type="PRO" id="PR:P11087"/>
<dbReference type="Proteomes" id="UP000000589">
    <property type="component" value="Chromosome 11"/>
</dbReference>
<dbReference type="RNAct" id="P11087">
    <property type="molecule type" value="protein"/>
</dbReference>
<dbReference type="Bgee" id="ENSMUSG00000001506">
    <property type="expression patterns" value="Expressed in diaphysis of femur and 288 other cell types or tissues"/>
</dbReference>
<dbReference type="GO" id="GO:0005581">
    <property type="term" value="C:collagen trimer"/>
    <property type="evidence" value="ECO:0000314"/>
    <property type="project" value="MGI"/>
</dbReference>
<dbReference type="GO" id="GO:0005584">
    <property type="term" value="C:collagen type I trimer"/>
    <property type="evidence" value="ECO:0000314"/>
    <property type="project" value="MGI"/>
</dbReference>
<dbReference type="GO" id="GO:0062023">
    <property type="term" value="C:collagen-containing extracellular matrix"/>
    <property type="evidence" value="ECO:0007005"/>
    <property type="project" value="UniProtKB"/>
</dbReference>
<dbReference type="GO" id="GO:0005737">
    <property type="term" value="C:cytoplasm"/>
    <property type="evidence" value="ECO:0000314"/>
    <property type="project" value="MGI"/>
</dbReference>
<dbReference type="GO" id="GO:0031012">
    <property type="term" value="C:extracellular matrix"/>
    <property type="evidence" value="ECO:0000314"/>
    <property type="project" value="MGI"/>
</dbReference>
<dbReference type="GO" id="GO:0005576">
    <property type="term" value="C:extracellular region"/>
    <property type="evidence" value="ECO:0000304"/>
    <property type="project" value="Reactome"/>
</dbReference>
<dbReference type="GO" id="GO:0005615">
    <property type="term" value="C:extracellular space"/>
    <property type="evidence" value="ECO:0000314"/>
    <property type="project" value="MGI"/>
</dbReference>
<dbReference type="GO" id="GO:0030141">
    <property type="term" value="C:secretory granule"/>
    <property type="evidence" value="ECO:0007669"/>
    <property type="project" value="Ensembl"/>
</dbReference>
<dbReference type="GO" id="GO:0005201">
    <property type="term" value="F:extracellular matrix structural constituent"/>
    <property type="evidence" value="ECO:0000314"/>
    <property type="project" value="MGI"/>
</dbReference>
<dbReference type="GO" id="GO:0042802">
    <property type="term" value="F:identical protein binding"/>
    <property type="evidence" value="ECO:0000353"/>
    <property type="project" value="MGI"/>
</dbReference>
<dbReference type="GO" id="GO:0046872">
    <property type="term" value="F:metal ion binding"/>
    <property type="evidence" value="ECO:0007669"/>
    <property type="project" value="UniProtKB-KW"/>
</dbReference>
<dbReference type="GO" id="GO:0048407">
    <property type="term" value="F:platelet-derived growth factor binding"/>
    <property type="evidence" value="ECO:0000266"/>
    <property type="project" value="MGI"/>
</dbReference>
<dbReference type="GO" id="GO:0002020">
    <property type="term" value="F:protease binding"/>
    <property type="evidence" value="ECO:0007669"/>
    <property type="project" value="Ensembl"/>
</dbReference>
<dbReference type="GO" id="GO:0001568">
    <property type="term" value="P:blood vessel development"/>
    <property type="evidence" value="ECO:0000315"/>
    <property type="project" value="MGI"/>
</dbReference>
<dbReference type="GO" id="GO:0060346">
    <property type="term" value="P:bone trabecula formation"/>
    <property type="evidence" value="ECO:0000316"/>
    <property type="project" value="MGI"/>
</dbReference>
<dbReference type="GO" id="GO:0060351">
    <property type="term" value="P:cartilage development involved in endochondral bone morphogenesis"/>
    <property type="evidence" value="ECO:0000315"/>
    <property type="project" value="MGI"/>
</dbReference>
<dbReference type="GO" id="GO:0071230">
    <property type="term" value="P:cellular response to amino acid stimulus"/>
    <property type="evidence" value="ECO:0000314"/>
    <property type="project" value="MGI"/>
</dbReference>
<dbReference type="GO" id="GO:0071364">
    <property type="term" value="P:cellular response to epidermal growth factor stimulus"/>
    <property type="evidence" value="ECO:0007669"/>
    <property type="project" value="Ensembl"/>
</dbReference>
<dbReference type="GO" id="GO:0044344">
    <property type="term" value="P:cellular response to fibroblast growth factor stimulus"/>
    <property type="evidence" value="ECO:0007669"/>
    <property type="project" value="Ensembl"/>
</dbReference>
<dbReference type="GO" id="GO:1902618">
    <property type="term" value="P:cellular response to fluoride"/>
    <property type="evidence" value="ECO:0007669"/>
    <property type="project" value="Ensembl"/>
</dbReference>
<dbReference type="GO" id="GO:0071333">
    <property type="term" value="P:cellular response to glucose stimulus"/>
    <property type="evidence" value="ECO:0007669"/>
    <property type="project" value="Ensembl"/>
</dbReference>
<dbReference type="GO" id="GO:0071260">
    <property type="term" value="P:cellular response to mechanical stimulus"/>
    <property type="evidence" value="ECO:0000270"/>
    <property type="project" value="UniProtKB"/>
</dbReference>
<dbReference type="GO" id="GO:0071300">
    <property type="term" value="P:cellular response to retinoic acid"/>
    <property type="evidence" value="ECO:0007669"/>
    <property type="project" value="Ensembl"/>
</dbReference>
<dbReference type="GO" id="GO:0071560">
    <property type="term" value="P:cellular response to transforming growth factor beta stimulus"/>
    <property type="evidence" value="ECO:0007669"/>
    <property type="project" value="Ensembl"/>
</dbReference>
<dbReference type="GO" id="GO:0071356">
    <property type="term" value="P:cellular response to tumor necrosis factor"/>
    <property type="evidence" value="ECO:0007669"/>
    <property type="project" value="Ensembl"/>
</dbReference>
<dbReference type="GO" id="GO:0071306">
    <property type="term" value="P:cellular response to vitamin E"/>
    <property type="evidence" value="ECO:0007669"/>
    <property type="project" value="Ensembl"/>
</dbReference>
<dbReference type="GO" id="GO:0032964">
    <property type="term" value="P:collagen biosynthetic process"/>
    <property type="evidence" value="ECO:0007669"/>
    <property type="project" value="Ensembl"/>
</dbReference>
<dbReference type="GO" id="GO:0030199">
    <property type="term" value="P:collagen fibril organization"/>
    <property type="evidence" value="ECO:0000303"/>
    <property type="project" value="ComplexPortal"/>
</dbReference>
<dbReference type="GO" id="GO:0038063">
    <property type="term" value="P:collagen-activated tyrosine kinase receptor signaling pathway"/>
    <property type="evidence" value="ECO:0000266"/>
    <property type="project" value="MGI"/>
</dbReference>
<dbReference type="GO" id="GO:0048706">
    <property type="term" value="P:embryonic skeletal system development"/>
    <property type="evidence" value="ECO:0007669"/>
    <property type="project" value="Ensembl"/>
</dbReference>
<dbReference type="GO" id="GO:0001958">
    <property type="term" value="P:endochondral ossification"/>
    <property type="evidence" value="ECO:0000315"/>
    <property type="project" value="MGI"/>
</dbReference>
<dbReference type="GO" id="GO:0060325">
    <property type="term" value="P:face morphogenesis"/>
    <property type="evidence" value="ECO:0000316"/>
    <property type="project" value="MGI"/>
</dbReference>
<dbReference type="GO" id="GO:0001957">
    <property type="term" value="P:intramembranous ossification"/>
    <property type="evidence" value="ECO:0000316"/>
    <property type="project" value="MGI"/>
</dbReference>
<dbReference type="GO" id="GO:0010812">
    <property type="term" value="P:negative regulation of cell-substrate adhesion"/>
    <property type="evidence" value="ECO:0000314"/>
    <property type="project" value="MGI"/>
</dbReference>
<dbReference type="GO" id="GO:0001649">
    <property type="term" value="P:osteoblast differentiation"/>
    <property type="evidence" value="ECO:0000270"/>
    <property type="project" value="BHF-UCL"/>
</dbReference>
<dbReference type="GO" id="GO:0090263">
    <property type="term" value="P:positive regulation of canonical Wnt signaling pathway"/>
    <property type="evidence" value="ECO:0007669"/>
    <property type="project" value="Ensembl"/>
</dbReference>
<dbReference type="GO" id="GO:0030335">
    <property type="term" value="P:positive regulation of cell migration"/>
    <property type="evidence" value="ECO:0007669"/>
    <property type="project" value="Ensembl"/>
</dbReference>
<dbReference type="GO" id="GO:0045893">
    <property type="term" value="P:positive regulation of DNA-templated transcription"/>
    <property type="evidence" value="ECO:0007669"/>
    <property type="project" value="Ensembl"/>
</dbReference>
<dbReference type="GO" id="GO:0010718">
    <property type="term" value="P:positive regulation of epithelial to mesenchymal transition"/>
    <property type="evidence" value="ECO:0007669"/>
    <property type="project" value="Ensembl"/>
</dbReference>
<dbReference type="GO" id="GO:0034504">
    <property type="term" value="P:protein localization to nucleus"/>
    <property type="evidence" value="ECO:0007669"/>
    <property type="project" value="Ensembl"/>
</dbReference>
<dbReference type="GO" id="GO:0015031">
    <property type="term" value="P:protein transport"/>
    <property type="evidence" value="ECO:0000315"/>
    <property type="project" value="MGI"/>
</dbReference>
<dbReference type="GO" id="GO:0051591">
    <property type="term" value="P:response to cAMP"/>
    <property type="evidence" value="ECO:0007669"/>
    <property type="project" value="Ensembl"/>
</dbReference>
<dbReference type="GO" id="GO:0032355">
    <property type="term" value="P:response to estradiol"/>
    <property type="evidence" value="ECO:0007669"/>
    <property type="project" value="Ensembl"/>
</dbReference>
<dbReference type="GO" id="GO:0042542">
    <property type="term" value="P:response to hydrogen peroxide"/>
    <property type="evidence" value="ECO:0007669"/>
    <property type="project" value="Ensembl"/>
</dbReference>
<dbReference type="GO" id="GO:0055093">
    <property type="term" value="P:response to hyperoxia"/>
    <property type="evidence" value="ECO:0007669"/>
    <property type="project" value="Ensembl"/>
</dbReference>
<dbReference type="GO" id="GO:0032868">
    <property type="term" value="P:response to insulin"/>
    <property type="evidence" value="ECO:0007669"/>
    <property type="project" value="Ensembl"/>
</dbReference>
<dbReference type="GO" id="GO:0048545">
    <property type="term" value="P:response to steroid hormone"/>
    <property type="evidence" value="ECO:0007669"/>
    <property type="project" value="Ensembl"/>
</dbReference>
<dbReference type="GO" id="GO:0009410">
    <property type="term" value="P:response to xenobiotic stimulus"/>
    <property type="evidence" value="ECO:0007669"/>
    <property type="project" value="Ensembl"/>
</dbReference>
<dbReference type="GO" id="GO:0007605">
    <property type="term" value="P:sensory perception of sound"/>
    <property type="evidence" value="ECO:0007669"/>
    <property type="project" value="Ensembl"/>
</dbReference>
<dbReference type="GO" id="GO:0001501">
    <property type="term" value="P:skeletal system development"/>
    <property type="evidence" value="ECO:0000315"/>
    <property type="project" value="MGI"/>
</dbReference>
<dbReference type="GO" id="GO:0048705">
    <property type="term" value="P:skeletal system morphogenesis"/>
    <property type="evidence" value="ECO:0000316"/>
    <property type="project" value="MGI"/>
</dbReference>
<dbReference type="GO" id="GO:0043588">
    <property type="term" value="P:skin development"/>
    <property type="evidence" value="ECO:0000315"/>
    <property type="project" value="MGI"/>
</dbReference>
<dbReference type="GO" id="GO:0043589">
    <property type="term" value="P:skin morphogenesis"/>
    <property type="evidence" value="ECO:0007669"/>
    <property type="project" value="Ensembl"/>
</dbReference>
<dbReference type="GO" id="GO:0034505">
    <property type="term" value="P:tooth mineralization"/>
    <property type="evidence" value="ECO:0007669"/>
    <property type="project" value="Ensembl"/>
</dbReference>
<dbReference type="GO" id="GO:0007601">
    <property type="term" value="P:visual perception"/>
    <property type="evidence" value="ECO:0007669"/>
    <property type="project" value="Ensembl"/>
</dbReference>
<dbReference type="FunFam" id="2.60.120.1000:FF:000001">
    <property type="entry name" value="Collagen alpha-1 type I chain"/>
    <property type="match status" value="1"/>
</dbReference>
<dbReference type="Gene3D" id="2.60.120.1000">
    <property type="match status" value="1"/>
</dbReference>
<dbReference type="Gene3D" id="2.10.70.10">
    <property type="entry name" value="Complement Module, domain 1"/>
    <property type="match status" value="1"/>
</dbReference>
<dbReference type="InterPro" id="IPR008160">
    <property type="entry name" value="Collagen"/>
</dbReference>
<dbReference type="InterPro" id="IPR050149">
    <property type="entry name" value="Collagen_superfamily"/>
</dbReference>
<dbReference type="InterPro" id="IPR000885">
    <property type="entry name" value="Fib_collagen_C"/>
</dbReference>
<dbReference type="InterPro" id="IPR001007">
    <property type="entry name" value="VWF_dom"/>
</dbReference>
<dbReference type="PANTHER" id="PTHR24023">
    <property type="entry name" value="COLLAGEN ALPHA"/>
    <property type="match status" value="1"/>
</dbReference>
<dbReference type="PANTHER" id="PTHR24023:SF1082">
    <property type="entry name" value="COLLAGEN TRIPLE HELIX REPEAT"/>
    <property type="match status" value="1"/>
</dbReference>
<dbReference type="Pfam" id="PF01410">
    <property type="entry name" value="COLFI"/>
    <property type="match status" value="1"/>
</dbReference>
<dbReference type="Pfam" id="PF01391">
    <property type="entry name" value="Collagen"/>
    <property type="match status" value="12"/>
</dbReference>
<dbReference type="Pfam" id="PF00093">
    <property type="entry name" value="VWC"/>
    <property type="match status" value="1"/>
</dbReference>
<dbReference type="SMART" id="SM00038">
    <property type="entry name" value="COLFI"/>
    <property type="match status" value="1"/>
</dbReference>
<dbReference type="SMART" id="SM00214">
    <property type="entry name" value="VWC"/>
    <property type="match status" value="1"/>
</dbReference>
<dbReference type="SUPFAM" id="SSF57603">
    <property type="entry name" value="FnI-like domain"/>
    <property type="match status" value="1"/>
</dbReference>
<dbReference type="PROSITE" id="PS51461">
    <property type="entry name" value="NC1_FIB"/>
    <property type="match status" value="1"/>
</dbReference>
<dbReference type="PROSITE" id="PS01208">
    <property type="entry name" value="VWFC_1"/>
    <property type="match status" value="1"/>
</dbReference>
<dbReference type="PROSITE" id="PS50184">
    <property type="entry name" value="VWFC_2"/>
    <property type="match status" value="1"/>
</dbReference>
<proteinExistence type="evidence at protein level"/>
<evidence type="ECO:0000250" key="1"/>
<evidence type="ECO:0000250" key="2">
    <source>
        <dbReference type="UniProtKB" id="P02452"/>
    </source>
</evidence>
<evidence type="ECO:0000250" key="3">
    <source>
        <dbReference type="UniProtKB" id="P02453"/>
    </source>
</evidence>
<evidence type="ECO:0000250" key="4">
    <source>
        <dbReference type="UniProtKB" id="P02454"/>
    </source>
</evidence>
<evidence type="ECO:0000250" key="5">
    <source>
        <dbReference type="UniProtKB" id="P02457"/>
    </source>
</evidence>
<evidence type="ECO:0000255" key="6"/>
<evidence type="ECO:0000255" key="7">
    <source>
        <dbReference type="PROSITE-ProRule" id="PRU00220"/>
    </source>
</evidence>
<evidence type="ECO:0000255" key="8">
    <source>
        <dbReference type="PROSITE-ProRule" id="PRU00793"/>
    </source>
</evidence>
<evidence type="ECO:0000256" key="9">
    <source>
        <dbReference type="SAM" id="MobiDB-lite"/>
    </source>
</evidence>
<evidence type="ECO:0000269" key="10">
    <source>
    </source>
</evidence>
<evidence type="ECO:0000269" key="11">
    <source>
    </source>
</evidence>
<evidence type="ECO:0000269" key="12">
    <source>
    </source>
</evidence>
<evidence type="ECO:0000269" key="13">
    <source>
    </source>
</evidence>
<evidence type="ECO:0000269" key="14">
    <source>
    </source>
</evidence>
<evidence type="ECO:0000303" key="15">
    <source>
    </source>
</evidence>
<evidence type="ECO:0000305" key="16"/>
<evidence type="ECO:0000305" key="17">
    <source>
    </source>
</evidence>
<evidence type="ECO:0000312" key="18">
    <source>
        <dbReference type="MGI" id="MGI:88467"/>
    </source>
</evidence>
<feature type="signal peptide">
    <location>
        <begin position="1"/>
        <end position="22"/>
    </location>
</feature>
<feature type="propeptide" id="PRO_0000005722" description="N-terminal propeptide">
    <location>
        <begin position="23"/>
        <end position="151"/>
    </location>
</feature>
<feature type="chain" id="PRO_0000005723" description="Collagen alpha-1(I) chain">
    <location>
        <begin position="152"/>
        <end position="1207"/>
    </location>
</feature>
<feature type="propeptide" id="PRO_0000005724" description="C-terminal propeptide">
    <location>
        <begin position="1208"/>
        <end position="1453"/>
    </location>
</feature>
<feature type="domain" description="VWFC" evidence="7">
    <location>
        <begin position="29"/>
        <end position="87"/>
    </location>
</feature>
<feature type="domain" description="Fibrillar collagen NC1" evidence="8">
    <location>
        <begin position="1218"/>
        <end position="1453"/>
    </location>
</feature>
<feature type="region of interest" description="Disordered" evidence="9">
    <location>
        <begin position="94"/>
        <end position="1210"/>
    </location>
</feature>
<feature type="region of interest" description="Nonhelical region (N-terminal)">
    <location>
        <begin position="152"/>
        <end position="167"/>
    </location>
</feature>
<feature type="region of interest" description="Triple-helical region">
    <location>
        <begin position="168"/>
        <end position="1181"/>
    </location>
</feature>
<feature type="region of interest" description="Nonhelical region (C-terminal)">
    <location>
        <begin position="1182"/>
        <end position="1207"/>
    </location>
</feature>
<feature type="short sequence motif" description="Cell attachment site" evidence="6">
    <location>
        <begin position="734"/>
        <end position="736"/>
    </location>
</feature>
<feature type="short sequence motif" description="Cell attachment site" evidence="6">
    <location>
        <begin position="1082"/>
        <end position="1084"/>
    </location>
</feature>
<feature type="compositionally biased region" description="Pro residues" evidence="9">
    <location>
        <begin position="109"/>
        <end position="118"/>
    </location>
</feature>
<feature type="compositionally biased region" description="Pro residues" evidence="9">
    <location>
        <begin position="128"/>
        <end position="143"/>
    </location>
</feature>
<feature type="compositionally biased region" description="Gly residues" evidence="9">
    <location>
        <begin position="198"/>
        <end position="207"/>
    </location>
</feature>
<feature type="compositionally biased region" description="Basic and acidic residues" evidence="9">
    <location>
        <begin position="218"/>
        <end position="232"/>
    </location>
</feature>
<feature type="compositionally biased region" description="Low complexity" evidence="9">
    <location>
        <begin position="268"/>
        <end position="284"/>
    </location>
</feature>
<feature type="compositionally biased region" description="Low complexity" evidence="9">
    <location>
        <begin position="307"/>
        <end position="320"/>
    </location>
</feature>
<feature type="compositionally biased region" description="Pro residues" evidence="9">
    <location>
        <begin position="322"/>
        <end position="334"/>
    </location>
</feature>
<feature type="compositionally biased region" description="Low complexity" evidence="9">
    <location>
        <begin position="368"/>
        <end position="407"/>
    </location>
</feature>
<feature type="compositionally biased region" description="Gly residues" evidence="9">
    <location>
        <begin position="474"/>
        <end position="483"/>
    </location>
</feature>
<feature type="compositionally biased region" description="Low complexity" evidence="9">
    <location>
        <begin position="499"/>
        <end position="515"/>
    </location>
</feature>
<feature type="compositionally biased region" description="Low complexity" evidence="9">
    <location>
        <begin position="527"/>
        <end position="566"/>
    </location>
</feature>
<feature type="compositionally biased region" description="Low complexity" evidence="9">
    <location>
        <begin position="623"/>
        <end position="650"/>
    </location>
</feature>
<feature type="compositionally biased region" description="Low complexity" evidence="9">
    <location>
        <begin position="685"/>
        <end position="695"/>
    </location>
</feature>
<feature type="compositionally biased region" description="Low complexity" evidence="9">
    <location>
        <begin position="703"/>
        <end position="716"/>
    </location>
</feature>
<feature type="compositionally biased region" description="Low complexity" evidence="9">
    <location>
        <begin position="800"/>
        <end position="815"/>
    </location>
</feature>
<feature type="compositionally biased region" description="Pro residues" evidence="9">
    <location>
        <begin position="829"/>
        <end position="841"/>
    </location>
</feature>
<feature type="compositionally biased region" description="Low complexity" evidence="9">
    <location>
        <begin position="842"/>
        <end position="872"/>
    </location>
</feature>
<feature type="compositionally biased region" description="Low complexity" evidence="9">
    <location>
        <begin position="901"/>
        <end position="910"/>
    </location>
</feature>
<feature type="compositionally biased region" description="Low complexity" evidence="9">
    <location>
        <begin position="920"/>
        <end position="935"/>
    </location>
</feature>
<feature type="compositionally biased region" description="Pro residues" evidence="9">
    <location>
        <begin position="985"/>
        <end position="995"/>
    </location>
</feature>
<feature type="compositionally biased region" description="Low complexity" evidence="9">
    <location>
        <begin position="997"/>
        <end position="1012"/>
    </location>
</feature>
<feature type="compositionally biased region" description="Pro residues" evidence="9">
    <location>
        <begin position="1031"/>
        <end position="1046"/>
    </location>
</feature>
<feature type="compositionally biased region" description="Low complexity" evidence="9">
    <location>
        <begin position="1067"/>
        <end position="1081"/>
    </location>
</feature>
<feature type="compositionally biased region" description="Basic and acidic residues" evidence="9">
    <location>
        <begin position="1082"/>
        <end position="1096"/>
    </location>
</feature>
<feature type="compositionally biased region" description="Low complexity" evidence="9">
    <location>
        <begin position="1102"/>
        <end position="1148"/>
    </location>
</feature>
<feature type="compositionally biased region" description="Pro residues" evidence="9">
    <location>
        <begin position="1166"/>
        <end position="1181"/>
    </location>
</feature>
<feature type="compositionally biased region" description="Basic and acidic residues" evidence="9">
    <location>
        <begin position="1197"/>
        <end position="1210"/>
    </location>
</feature>
<feature type="binding site" evidence="1">
    <location>
        <position position="1266"/>
    </location>
    <ligand>
        <name>Ca(2+)</name>
        <dbReference type="ChEBI" id="CHEBI:29108"/>
    </ligand>
</feature>
<feature type="binding site" evidence="1">
    <location>
        <position position="1268"/>
    </location>
    <ligand>
        <name>Ca(2+)</name>
        <dbReference type="ChEBI" id="CHEBI:29108"/>
    </ligand>
</feature>
<feature type="binding site" evidence="1">
    <location>
        <position position="1269"/>
    </location>
    <ligand>
        <name>Ca(2+)</name>
        <dbReference type="ChEBI" id="CHEBI:29108"/>
    </ligand>
</feature>
<feature type="binding site" evidence="1">
    <location>
        <position position="1271"/>
    </location>
    <ligand>
        <name>Ca(2+)</name>
        <dbReference type="ChEBI" id="CHEBI:29108"/>
    </ligand>
</feature>
<feature type="binding site" evidence="1">
    <location>
        <position position="1274"/>
    </location>
    <ligand>
        <name>Ca(2+)</name>
        <dbReference type="ChEBI" id="CHEBI:29108"/>
    </ligand>
</feature>
<feature type="modified residue" description="Allysine" evidence="2">
    <location>
        <position position="160"/>
    </location>
</feature>
<feature type="modified residue" description="Phosphoserine" evidence="4">
    <location>
        <position position="161"/>
    </location>
</feature>
<feature type="modified residue" description="4-hydroxyproline" evidence="5">
    <location>
        <position position="179"/>
    </location>
</feature>
<feature type="modified residue" description="4-hydroxyproline" evidence="5">
    <location>
        <position position="182"/>
    </location>
</feature>
<feature type="modified residue" description="4-hydroxyproline" evidence="5">
    <location>
        <position position="185"/>
    </location>
</feature>
<feature type="modified residue" description="4-hydroxyproline" evidence="5">
    <location>
        <position position="194"/>
    </location>
</feature>
<feature type="modified residue" description="4-hydroxyproline" evidence="5">
    <location>
        <position position="197"/>
    </location>
</feature>
<feature type="modified residue" description="4-hydroxyproline" evidence="5">
    <location>
        <position position="200"/>
    </location>
</feature>
<feature type="modified residue" description="4-hydroxyproline" evidence="5">
    <location>
        <position position="215"/>
    </location>
</feature>
<feature type="modified residue" description="4-hydroxyproline" evidence="5">
    <location>
        <position position="230"/>
    </location>
</feature>
<feature type="modified residue" description="4-hydroxyproline" evidence="5">
    <location>
        <position position="236"/>
    </location>
</feature>
<feature type="modified residue" description="4-hydroxyproline" evidence="5">
    <location>
        <position position="245"/>
    </location>
</feature>
<feature type="modified residue" description="4-hydroxyproline" evidence="5">
    <location>
        <position position="251"/>
    </location>
</feature>
<feature type="modified residue" description="5-hydroxylysine; alternate" evidence="13">
    <location>
        <position position="254"/>
    </location>
</feature>
<feature type="modified residue" description="Phosphoserine" evidence="4">
    <location>
        <position position="260"/>
    </location>
</feature>
<feature type="modified residue" description="4-hydroxyproline" evidence="5">
    <location>
        <position position="278"/>
    </location>
</feature>
<feature type="modified residue" description="4-hydroxyproline" evidence="5">
    <location>
        <position position="281"/>
    </location>
</feature>
<feature type="modified residue" description="4-hydroxyproline" evidence="5">
    <location>
        <position position="287"/>
    </location>
</feature>
<feature type="modified residue" description="4-hydroxyproline" evidence="5">
    <location>
        <position position="296"/>
    </location>
</feature>
<feature type="modified residue" description="4-hydroxyproline" evidence="5">
    <location>
        <position position="302"/>
    </location>
</feature>
<feature type="modified residue" description="4-hydroxyproline" evidence="5">
    <location>
        <position position="323"/>
    </location>
</feature>
<feature type="modified residue" description="4-hydroxyproline" evidence="5">
    <location>
        <position position="332"/>
    </location>
</feature>
<feature type="modified residue" description="4-hydroxyproline" evidence="5">
    <location>
        <position position="335"/>
    </location>
</feature>
<feature type="modified residue" description="4-hydroxyproline" evidence="5">
    <location>
        <position position="362"/>
    </location>
</feature>
<feature type="modified residue" description="4-hydroxyproline" evidence="5">
    <location>
        <position position="365"/>
    </location>
</feature>
<feature type="modified residue" description="4-hydroxyproline" evidence="5">
    <location>
        <position position="377"/>
    </location>
</feature>
<feature type="modified residue" description="4-hydroxyproline" evidence="5">
    <location>
        <position position="383"/>
    </location>
</feature>
<feature type="modified residue" description="4-hydroxyproline" evidence="5">
    <location>
        <position position="392"/>
    </location>
</feature>
<feature type="modified residue" description="4-hydroxyproline" evidence="5">
    <location>
        <position position="398"/>
    </location>
</feature>
<feature type="modified residue" description="4-hydroxyproline" evidence="5">
    <location>
        <position position="401"/>
    </location>
</feature>
<feature type="modified residue" description="4-hydroxyproline" evidence="5">
    <location>
        <position position="416"/>
    </location>
</feature>
<feature type="modified residue" description="5-hydroxylysine" evidence="5">
    <location>
        <position position="419"/>
    </location>
</feature>
<feature type="modified residue" description="4-hydroxyproline" evidence="5">
    <location>
        <position position="425"/>
    </location>
</feature>
<feature type="modified residue" description="4-hydroxyproline" evidence="5">
    <location>
        <position position="428"/>
    </location>
</feature>
<feature type="modified residue" description="4-hydroxyproline" evidence="5">
    <location>
        <position position="440"/>
    </location>
</feature>
<feature type="modified residue" description="4-hydroxyproline" evidence="5">
    <location>
        <position position="449"/>
    </location>
</feature>
<feature type="modified residue" description="4-hydroxyproline" evidence="5">
    <location>
        <position position="464"/>
    </location>
</feature>
<feature type="modified residue" description="4-hydroxyproline" evidence="5">
    <location>
        <position position="470"/>
    </location>
</feature>
<feature type="modified residue" description="4-hydroxyproline" evidence="5">
    <location>
        <position position="479"/>
    </location>
</feature>
<feature type="modified residue" description="4-hydroxyproline" evidence="5">
    <location>
        <position position="485"/>
    </location>
</feature>
<feature type="modified residue" description="5-hydroxylysine" evidence="5">
    <location>
        <position position="494"/>
    </location>
</feature>
<feature type="modified residue" description="4-hydroxyproline" evidence="5">
    <location>
        <position position="503"/>
    </location>
</feature>
<feature type="modified residue" description="4-hydroxyproline" evidence="5">
    <location>
        <position position="512"/>
    </location>
</feature>
<feature type="modified residue" description="4-hydroxyproline" evidence="5">
    <location>
        <position position="518"/>
    </location>
</feature>
<feature type="modified residue" description="4-hydroxyproline" evidence="5">
    <location>
        <position position="524"/>
    </location>
</feature>
<feature type="modified residue" description="4-hydroxyproline" evidence="5">
    <location>
        <position position="533"/>
    </location>
</feature>
<feature type="modified residue" description="4-hydroxyproline" evidence="5">
    <location>
        <position position="536"/>
    </location>
</feature>
<feature type="modified residue" description="4-hydroxyproline" evidence="5">
    <location>
        <position position="545"/>
    </location>
</feature>
<feature type="modified residue" description="4-hydroxyproline" evidence="5">
    <location>
        <position position="554"/>
    </location>
</feature>
<feature type="modified residue" description="4-hydroxyproline" evidence="5">
    <location>
        <position position="560"/>
    </location>
</feature>
<feature type="modified residue" description="4-hydroxyproline" evidence="5">
    <location>
        <position position="572"/>
    </location>
</feature>
<feature type="modified residue" description="4-hydroxyproline" evidence="5">
    <location>
        <position position="581"/>
    </location>
</feature>
<feature type="modified residue" description="4-hydroxyproline" evidence="5">
    <location>
        <position position="590"/>
    </location>
</feature>
<feature type="modified residue" description="4-hydroxyproline" evidence="5">
    <location>
        <position position="593"/>
    </location>
</feature>
<feature type="modified residue" description="4-hydroxyproline" evidence="5">
    <location>
        <position position="611"/>
    </location>
</feature>
<feature type="modified residue" description="4-hydroxyproline" evidence="5">
    <location>
        <position position="629"/>
    </location>
</feature>
<feature type="modified residue" description="4-hydroxyproline" evidence="5">
    <location>
        <position position="635"/>
    </location>
</feature>
<feature type="modified residue" description="4-hydroxyproline" evidence="5">
    <location>
        <position position="641"/>
    </location>
</feature>
<feature type="modified residue" description="4-hydroxyproline" evidence="5">
    <location>
        <position position="647"/>
    </location>
</feature>
<feature type="modified residue" description="4-hydroxyproline" evidence="5">
    <location>
        <position position="653"/>
    </location>
</feature>
<feature type="modified residue" description="4-hydroxyproline" evidence="5">
    <location>
        <position position="659"/>
    </location>
</feature>
<feature type="modified residue" description="4-hydroxyproline" evidence="5">
    <location>
        <position position="671"/>
    </location>
</feature>
<feature type="modified residue" description="4-hydroxyproline" evidence="5">
    <location>
        <position position="680"/>
    </location>
</feature>
<feature type="modified residue" description="4-hydroxyproline" evidence="5">
    <location>
        <position position="692"/>
    </location>
</feature>
<feature type="modified residue" description="4-hydroxyproline" evidence="5">
    <location>
        <position position="704"/>
    </location>
</feature>
<feature type="modified residue" description="4-hydroxyproline" evidence="5">
    <location>
        <position position="707"/>
    </location>
</feature>
<feature type="modified residue" description="4-hydroxyproline" evidence="5">
    <location>
        <position position="713"/>
    </location>
</feature>
<feature type="modified residue" description="4-hydroxyproline" evidence="5">
    <location>
        <position position="719"/>
    </location>
</feature>
<feature type="modified residue" description="4-hydroxyproline" evidence="5">
    <location>
        <position position="728"/>
    </location>
</feature>
<feature type="modified residue" description="5-hydroxylysine" evidence="5">
    <location>
        <position position="740"/>
    </location>
</feature>
<feature type="modified residue" description="4-hydroxyproline" evidence="5">
    <location>
        <position position="746"/>
    </location>
</feature>
<feature type="modified residue" description="4-hydroxyproline" evidence="5">
    <location>
        <position position="761"/>
    </location>
</feature>
<feature type="modified residue" description="4-hydroxyproline" evidence="5">
    <location>
        <position position="767"/>
    </location>
</feature>
<feature type="modified residue" description="Phosphoserine" evidence="4">
    <location>
        <position position="776"/>
    </location>
</feature>
<feature type="modified residue" description="4-hydroxyproline" evidence="5">
    <location>
        <position position="788"/>
    </location>
</feature>
<feature type="modified residue" description="4-hydroxyproline" evidence="5">
    <location>
        <position position="797"/>
    </location>
</feature>
<feature type="modified residue" description="4-hydroxyproline" evidence="5">
    <location>
        <position position="806"/>
    </location>
</feature>
<feature type="modified residue" description="4-hydroxyproline" evidence="5">
    <location>
        <position position="812"/>
    </location>
</feature>
<feature type="modified residue" description="4-hydroxyproline" evidence="5">
    <location>
        <position position="830"/>
    </location>
</feature>
<feature type="modified residue" description="4-hydroxyproline" evidence="5">
    <location>
        <position position="839"/>
    </location>
</feature>
<feature type="modified residue" description="4-hydroxyproline" evidence="5">
    <location>
        <position position="848"/>
    </location>
</feature>
<feature type="modified residue" description="5-hydroxylysine" evidence="5">
    <location>
        <position position="851"/>
    </location>
</feature>
<feature type="modified residue" description="4-hydroxyproline" evidence="5">
    <location>
        <position position="860"/>
    </location>
</feature>
<feature type="modified residue" description="4-hydroxyproline" evidence="5">
    <location>
        <position position="866"/>
    </location>
</feature>
<feature type="modified residue" description="3-hydroxyproline" evidence="12">
    <location>
        <position position="874"/>
    </location>
</feature>
<feature type="modified residue" description="4-hydroxyproline" evidence="12">
    <location>
        <position position="875"/>
    </location>
</feature>
<feature type="modified residue" description="4-hydroxyproline" evidence="12">
    <location>
        <position position="884"/>
    </location>
</feature>
<feature type="modified residue" description="4-hydroxyproline" evidence="12">
    <location>
        <position position="887"/>
    </location>
</feature>
<feature type="modified residue" description="4-hydroxyproline" evidence="5">
    <location>
        <position position="908"/>
    </location>
</feature>
<feature type="modified residue" description="4-hydroxyproline" evidence="5">
    <location>
        <position position="917"/>
    </location>
</feature>
<feature type="modified residue" description="4-hydroxyproline" evidence="5">
    <location>
        <position position="926"/>
    </location>
</feature>
<feature type="modified residue" description="4-hydroxyproline" evidence="5">
    <location>
        <position position="935"/>
    </location>
</feature>
<feature type="modified residue" description="4-hydroxyproline" evidence="5">
    <location>
        <position position="953"/>
    </location>
</feature>
<feature type="modified residue" description="4-hydroxyproline" evidence="5">
    <location>
        <position position="962"/>
    </location>
</feature>
<feature type="modified residue" description="4-hydroxyproline" evidence="5">
    <location>
        <position position="965"/>
    </location>
</feature>
<feature type="modified residue" description="4-hydroxyproline" evidence="5">
    <location>
        <position position="971"/>
    </location>
</feature>
<feature type="modified residue" description="4-hydroxyproline" evidence="5">
    <location>
        <position position="986"/>
    </location>
</feature>
<feature type="modified residue" description="4-hydroxyproline" evidence="5">
    <location>
        <position position="992"/>
    </location>
</feature>
<feature type="modified residue" description="4-hydroxyproline" evidence="5">
    <location>
        <position position="998"/>
    </location>
</feature>
<feature type="modified residue" description="4-hydroxyproline" evidence="5">
    <location>
        <position position="1007"/>
    </location>
</feature>
<feature type="modified residue" description="4-hydroxyproline" evidence="5">
    <location>
        <position position="1013"/>
    </location>
</feature>
<feature type="modified residue" description="5-hydroxylysine" evidence="5">
    <location>
        <position position="1022"/>
    </location>
</feature>
<feature type="modified residue" description="4-hydroxyproline" evidence="5">
    <location>
        <position position="1034"/>
    </location>
</feature>
<feature type="modified residue" description="4-hydroxyproline" evidence="5">
    <location>
        <position position="1037"/>
    </location>
</feature>
<feature type="modified residue" description="4-hydroxyproline" evidence="5">
    <location>
        <position position="1040"/>
    </location>
</feature>
<feature type="modified residue" description="5-hydroxylysine" evidence="5">
    <location>
        <position position="1085"/>
    </location>
</feature>
<feature type="modified residue" description="5-hydroxylysine; alternate" evidence="13">
    <location>
        <position position="1097"/>
    </location>
</feature>
<feature type="modified residue" description="4-hydroxyproline" evidence="5">
    <location>
        <position position="1109"/>
    </location>
</feature>
<feature type="modified residue" description="4-hydroxyproline" evidence="5">
    <location>
        <position position="1112"/>
    </location>
</feature>
<feature type="modified residue" description="4-hydroxyproline" evidence="5">
    <location>
        <position position="1115"/>
    </location>
</feature>
<feature type="modified residue" description="4-hydroxyproline" evidence="5">
    <location>
        <position position="1133"/>
    </location>
</feature>
<feature type="modified residue" description="4-hydroxyproline" evidence="12">
    <location>
        <position position="1148"/>
    </location>
</feature>
<feature type="modified residue" description="3-hydroxyproline" evidence="12">
    <location>
        <position position="1153"/>
    </location>
</feature>
<feature type="modified residue" description="4-hydroxyproline" evidence="12">
    <location>
        <position position="1154"/>
    </location>
</feature>
<feature type="modified residue" description="3-hydroxyproline" evidence="12">
    <location>
        <position position="1168"/>
    </location>
</feature>
<feature type="modified residue" description="4-hydroxyproline" evidence="12">
    <location>
        <position position="1169"/>
    </location>
</feature>
<feature type="modified residue" description="3-hydroxyproline" evidence="12">
    <location>
        <position position="1171"/>
    </location>
</feature>
<feature type="modified residue" description="4-hydroxyproline" evidence="12">
    <location>
        <position position="1172"/>
    </location>
</feature>
<feature type="modified residue" description="3-hydroxyproline" evidence="12">
    <location>
        <position position="1174"/>
    </location>
</feature>
<feature type="modified residue" description="4-hydroxyproline" evidence="12">
    <location>
        <position position="1175"/>
    </location>
</feature>
<feature type="modified residue" description="4-hydroxyproline" evidence="12">
    <location>
        <position position="1178"/>
    </location>
</feature>
<feature type="modified residue" description="4-hydroxyproline" evidence="12">
    <location>
        <position position="1181"/>
    </location>
</feature>
<feature type="modified residue" description="Allysine" evidence="2">
    <location>
        <position position="1197"/>
    </location>
</feature>
<feature type="glycosylation site" description="N-linked (GlcNAc...) asparagine" evidence="6">
    <location>
        <position position="56"/>
    </location>
</feature>
<feature type="glycosylation site" description="O-linked (Gal...) hydroxylysine; alternate" evidence="13">
    <location>
        <position position="254"/>
    </location>
</feature>
<feature type="glycosylation site" description="O-linked (Gal...) hydroxylysine; alternate" evidence="13">
    <location>
        <position position="1097"/>
    </location>
</feature>
<feature type="glycosylation site" description="N-linked (GlcNAc...) asparagine" evidence="10">
    <location>
        <position position="1354"/>
    </location>
</feature>
<feature type="disulfide bond" evidence="8">
    <location>
        <begin position="1248"/>
        <end position="1280"/>
    </location>
</feature>
<feature type="disulfide bond" description="Interchain (with C-1271)" evidence="8">
    <location>
        <position position="1254"/>
    </location>
</feature>
<feature type="disulfide bond" description="Interchain (with C-1254)" evidence="8">
    <location>
        <position position="1271"/>
    </location>
</feature>
<feature type="disulfide bond" evidence="8">
    <location>
        <begin position="1288"/>
        <end position="1451"/>
    </location>
</feature>
<feature type="disulfide bond" evidence="8">
    <location>
        <begin position="1359"/>
        <end position="1404"/>
    </location>
</feature>
<feature type="splice variant" id="VSP_016548" description="In isoform 2." evidence="15">
    <location>
        <begin position="803"/>
        <end position="1030"/>
    </location>
</feature>
<feature type="sequence conflict" description="In Ref. 1; AAA88912." evidence="16" ref="1">
    <original>E</original>
    <variation>G</variation>
    <location>
        <position position="81"/>
    </location>
</feature>
<feature type="sequence conflict" description="In Ref. 1; AAA88912." evidence="16" ref="1">
    <original>D</original>
    <variation>G</variation>
    <location>
        <position position="106"/>
    </location>
</feature>
<feature type="sequence conflict" description="In Ref. 3; AAH59281." evidence="16" ref="3">
    <original>P</original>
    <variation>H</variation>
    <location>
        <position position="136"/>
    </location>
</feature>
<feature type="sequence conflict" description="In Ref. 1; AAA88912." evidence="16" ref="1">
    <original>G</original>
    <variation>D</variation>
    <location>
        <position position="1202"/>
    </location>
</feature>
<feature type="sequence conflict" description="In Ref. 1; AAA88912." evidence="16" ref="1">
    <original>E</original>
    <variation>A</variation>
    <location>
        <position position="1219"/>
    </location>
</feature>
<feature type="sequence conflict" description="In Ref. 1; AAA88912." evidence="16" ref="1">
    <original>T</original>
    <variation>A</variation>
    <location>
        <position position="1222"/>
    </location>
</feature>
<feature type="sequence conflict" description="In Ref. 1; AAA88912." evidence="16" ref="1">
    <original>A</original>
    <variation>T</variation>
    <location>
        <position position="1335"/>
    </location>
</feature>
<feature type="sequence conflict" description="In Ref. 1; AAA88912." evidence="16" ref="1">
    <original>TL</original>
    <variation>RV</variation>
    <location>
        <begin position="1399"/>
        <end position="1400"/>
    </location>
</feature>
<feature type="sequence conflict" description="In Ref. 10; CAA29927/CAA33904." evidence="16" ref="10">
    <original>A</original>
    <variation>V</variation>
    <location>
        <position position="1450"/>
    </location>
</feature>